<accession>P66831</accession>
<accession>Q99X82</accession>
<protein>
    <recommendedName>
        <fullName>Superoxide dismutase [Mn/Fe] 2</fullName>
        <ecNumber evidence="2">1.15.1.1</ecNumber>
    </recommendedName>
</protein>
<keyword id="KW-0408">Iron</keyword>
<keyword id="KW-0464">Manganese</keyword>
<keyword id="KW-0479">Metal-binding</keyword>
<keyword id="KW-0560">Oxidoreductase</keyword>
<keyword id="KW-0346">Stress response</keyword>
<comment type="function">
    <text evidence="2">Destroys superoxide anion radicals which are normally produced within the cells and which are toxic to biological systems. Catalyzes the dismutation of superoxide anion radicals into O2 and H2O2 by successive reduction and oxidation of the transition metal ion at the active site.</text>
</comment>
<comment type="catalytic activity">
    <reaction evidence="2">
        <text>2 superoxide + 2 H(+) = H2O2 + O2</text>
        <dbReference type="Rhea" id="RHEA:20696"/>
        <dbReference type="ChEBI" id="CHEBI:15378"/>
        <dbReference type="ChEBI" id="CHEBI:15379"/>
        <dbReference type="ChEBI" id="CHEBI:16240"/>
        <dbReference type="ChEBI" id="CHEBI:18421"/>
        <dbReference type="EC" id="1.15.1.1"/>
    </reaction>
    <physiologicalReaction direction="left-to-right" evidence="2">
        <dbReference type="Rhea" id="RHEA:20697"/>
    </physiologicalReaction>
</comment>
<comment type="cofactor">
    <cofactor evidence="2">
        <name>Mn(2+)</name>
        <dbReference type="ChEBI" id="CHEBI:29035"/>
    </cofactor>
    <cofactor evidence="2">
        <name>Fe(3+)</name>
        <dbReference type="ChEBI" id="CHEBI:29034"/>
    </cofactor>
    <text evidence="2">Binds 1 Mn(2+) or Fe(3+) ion per subunit.</text>
</comment>
<comment type="subunit">
    <text evidence="1">Homodimer. Can also form a heterodimer with SodA (By similarity).</text>
</comment>
<comment type="similarity">
    <text evidence="3">Belongs to the iron/manganese superoxide dismutase family.</text>
</comment>
<dbReference type="EC" id="1.15.1.1" evidence="2"/>
<dbReference type="EMBL" id="BA000018">
    <property type="protein sequence ID" value="BAB41348.1"/>
    <property type="molecule type" value="Genomic_DNA"/>
</dbReference>
<dbReference type="PIR" id="A89774">
    <property type="entry name" value="A89774"/>
</dbReference>
<dbReference type="RefSeq" id="WP_000874681.1">
    <property type="nucleotide sequence ID" value="NC_002745.2"/>
</dbReference>
<dbReference type="SMR" id="P66831"/>
<dbReference type="EnsemblBacteria" id="BAB41348">
    <property type="protein sequence ID" value="BAB41348"/>
    <property type="gene ID" value="BAB41348"/>
</dbReference>
<dbReference type="KEGG" id="sau:SA0128"/>
<dbReference type="HOGENOM" id="CLU_031625_0_0_9"/>
<dbReference type="GO" id="GO:0005737">
    <property type="term" value="C:cytoplasm"/>
    <property type="evidence" value="ECO:0007669"/>
    <property type="project" value="TreeGrafter"/>
</dbReference>
<dbReference type="GO" id="GO:0046872">
    <property type="term" value="F:metal ion binding"/>
    <property type="evidence" value="ECO:0007669"/>
    <property type="project" value="UniProtKB-KW"/>
</dbReference>
<dbReference type="GO" id="GO:0004784">
    <property type="term" value="F:superoxide dismutase activity"/>
    <property type="evidence" value="ECO:0007669"/>
    <property type="project" value="UniProtKB-EC"/>
</dbReference>
<dbReference type="FunFam" id="1.10.287.990:FF:000001">
    <property type="entry name" value="Superoxide dismutase"/>
    <property type="match status" value="1"/>
</dbReference>
<dbReference type="FunFam" id="3.55.40.20:FF:000001">
    <property type="entry name" value="Superoxide dismutase"/>
    <property type="match status" value="1"/>
</dbReference>
<dbReference type="Gene3D" id="1.10.287.990">
    <property type="entry name" value="Fe,Mn superoxide dismutase (SOD) domain"/>
    <property type="match status" value="1"/>
</dbReference>
<dbReference type="Gene3D" id="3.55.40.20">
    <property type="entry name" value="Iron/manganese superoxide dismutase, C-terminal domain"/>
    <property type="match status" value="1"/>
</dbReference>
<dbReference type="InterPro" id="IPR001189">
    <property type="entry name" value="Mn/Fe_SOD"/>
</dbReference>
<dbReference type="InterPro" id="IPR019833">
    <property type="entry name" value="Mn/Fe_SOD_BS"/>
</dbReference>
<dbReference type="InterPro" id="IPR019832">
    <property type="entry name" value="Mn/Fe_SOD_C"/>
</dbReference>
<dbReference type="InterPro" id="IPR019831">
    <property type="entry name" value="Mn/Fe_SOD_N"/>
</dbReference>
<dbReference type="InterPro" id="IPR036324">
    <property type="entry name" value="Mn/Fe_SOD_N_sf"/>
</dbReference>
<dbReference type="InterPro" id="IPR036314">
    <property type="entry name" value="SOD_C_sf"/>
</dbReference>
<dbReference type="PANTHER" id="PTHR43595">
    <property type="entry name" value="37S RIBOSOMAL PROTEIN S26, MITOCHONDRIAL"/>
    <property type="match status" value="1"/>
</dbReference>
<dbReference type="PANTHER" id="PTHR43595:SF2">
    <property type="entry name" value="SMALL RIBOSOMAL SUBUNIT PROTEIN MS42"/>
    <property type="match status" value="1"/>
</dbReference>
<dbReference type="Pfam" id="PF02777">
    <property type="entry name" value="Sod_Fe_C"/>
    <property type="match status" value="1"/>
</dbReference>
<dbReference type="Pfam" id="PF00081">
    <property type="entry name" value="Sod_Fe_N"/>
    <property type="match status" value="1"/>
</dbReference>
<dbReference type="PIRSF" id="PIRSF000349">
    <property type="entry name" value="SODismutase"/>
    <property type="match status" value="1"/>
</dbReference>
<dbReference type="PRINTS" id="PR01703">
    <property type="entry name" value="MNSODISMTASE"/>
</dbReference>
<dbReference type="SUPFAM" id="SSF54719">
    <property type="entry name" value="Fe,Mn superoxide dismutase (SOD), C-terminal domain"/>
    <property type="match status" value="1"/>
</dbReference>
<dbReference type="SUPFAM" id="SSF46609">
    <property type="entry name" value="Fe,Mn superoxide dismutase (SOD), N-terminal domain"/>
    <property type="match status" value="1"/>
</dbReference>
<dbReference type="PROSITE" id="PS00088">
    <property type="entry name" value="SOD_MN"/>
    <property type="match status" value="1"/>
</dbReference>
<reference key="1">
    <citation type="journal article" date="2001" name="Lancet">
        <title>Whole genome sequencing of meticillin-resistant Staphylococcus aureus.</title>
        <authorList>
            <person name="Kuroda M."/>
            <person name="Ohta T."/>
            <person name="Uchiyama I."/>
            <person name="Baba T."/>
            <person name="Yuzawa H."/>
            <person name="Kobayashi I."/>
            <person name="Cui L."/>
            <person name="Oguchi A."/>
            <person name="Aoki K."/>
            <person name="Nagai Y."/>
            <person name="Lian J.-Q."/>
            <person name="Ito T."/>
            <person name="Kanamori M."/>
            <person name="Matsumaru H."/>
            <person name="Maruyama A."/>
            <person name="Murakami H."/>
            <person name="Hosoyama A."/>
            <person name="Mizutani-Ui Y."/>
            <person name="Takahashi N.K."/>
            <person name="Sawano T."/>
            <person name="Inoue R."/>
            <person name="Kaito C."/>
            <person name="Sekimizu K."/>
            <person name="Hirakawa H."/>
            <person name="Kuhara S."/>
            <person name="Goto S."/>
            <person name="Yabuzaki J."/>
            <person name="Kanehisa M."/>
            <person name="Yamashita A."/>
            <person name="Oshima K."/>
            <person name="Furuya K."/>
            <person name="Yoshino C."/>
            <person name="Shiba T."/>
            <person name="Hattori M."/>
            <person name="Ogasawara N."/>
            <person name="Hayashi H."/>
            <person name="Hiramatsu K."/>
        </authorList>
    </citation>
    <scope>NUCLEOTIDE SEQUENCE [LARGE SCALE GENOMIC DNA]</scope>
    <source>
        <strain>N315</strain>
    </source>
</reference>
<reference key="2">
    <citation type="submission" date="2007-10" db="UniProtKB">
        <title>Shotgun proteomic analysis of total and membrane protein extracts of S. aureus strain N315.</title>
        <authorList>
            <person name="Vaezzadeh A.R."/>
            <person name="Deshusses J."/>
            <person name="Lescuyer P."/>
            <person name="Hochstrasser D.F."/>
        </authorList>
    </citation>
    <scope>IDENTIFICATION BY MASS SPECTROMETRY [LARGE SCALE ANALYSIS]</scope>
    <source>
        <strain>N315</strain>
    </source>
</reference>
<proteinExistence type="evidence at protein level"/>
<organism>
    <name type="scientific">Staphylococcus aureus (strain N315)</name>
    <dbReference type="NCBI Taxonomy" id="158879"/>
    <lineage>
        <taxon>Bacteria</taxon>
        <taxon>Bacillati</taxon>
        <taxon>Bacillota</taxon>
        <taxon>Bacilli</taxon>
        <taxon>Bacillales</taxon>
        <taxon>Staphylococcaceae</taxon>
        <taxon>Staphylococcus</taxon>
    </lineage>
</organism>
<sequence>MAFKLPNLPYAYDALEPYIDQRTMEFHHDKHHNTYVTKLNATVEGTELEHQSLADMIANLDKVPEAMRMSVRNNGGGHFNHSLFWEILSPNSEEKGGVIDDIKAQWGTLDEFKNEFANKATTLFGSGWTWLVVNDGKLEIVTTPNQDNPLTEGKTPILLFDVWEHAYYLKYQNKRPDYMTAFWNIVNWKKVDELYQAAK</sequence>
<gene>
    <name type="primary">sodM</name>
    <name type="ordered locus">SA0128</name>
</gene>
<name>SODM2_STAAN</name>
<feature type="chain" id="PRO_0000160081" description="Superoxide dismutase [Mn/Fe] 2">
    <location>
        <begin position="1"/>
        <end position="199"/>
    </location>
</feature>
<feature type="binding site" evidence="2">
    <location>
        <position position="27"/>
    </location>
    <ligand>
        <name>Fe(3+)</name>
        <dbReference type="ChEBI" id="CHEBI:29034"/>
    </ligand>
</feature>
<feature type="binding site" evidence="2">
    <location>
        <position position="27"/>
    </location>
    <ligand>
        <name>Mn(2+)</name>
        <dbReference type="ChEBI" id="CHEBI:29035"/>
    </ligand>
</feature>
<feature type="binding site" evidence="2">
    <location>
        <position position="81"/>
    </location>
    <ligand>
        <name>Fe(3+)</name>
        <dbReference type="ChEBI" id="CHEBI:29034"/>
    </ligand>
</feature>
<feature type="binding site" evidence="2">
    <location>
        <position position="81"/>
    </location>
    <ligand>
        <name>Mn(2+)</name>
        <dbReference type="ChEBI" id="CHEBI:29035"/>
    </ligand>
</feature>
<feature type="binding site" evidence="2">
    <location>
        <position position="161"/>
    </location>
    <ligand>
        <name>Fe(3+)</name>
        <dbReference type="ChEBI" id="CHEBI:29034"/>
    </ligand>
</feature>
<feature type="binding site" evidence="2">
    <location>
        <position position="161"/>
    </location>
    <ligand>
        <name>Mn(2+)</name>
        <dbReference type="ChEBI" id="CHEBI:29035"/>
    </ligand>
</feature>
<feature type="binding site" evidence="2">
    <location>
        <position position="165"/>
    </location>
    <ligand>
        <name>Fe(3+)</name>
        <dbReference type="ChEBI" id="CHEBI:29034"/>
    </ligand>
</feature>
<feature type="binding site" evidence="2">
    <location>
        <position position="165"/>
    </location>
    <ligand>
        <name>Mn(2+)</name>
        <dbReference type="ChEBI" id="CHEBI:29035"/>
    </ligand>
</feature>
<evidence type="ECO:0000250" key="1"/>
<evidence type="ECO:0000250" key="2">
    <source>
        <dbReference type="UniProtKB" id="P80293"/>
    </source>
</evidence>
<evidence type="ECO:0000305" key="3"/>